<comment type="function">
    <text evidence="1">Phosphorylation of dTMP to form dTDP in both de novo and salvage pathways of dTTP synthesis.</text>
</comment>
<comment type="catalytic activity">
    <reaction evidence="1">
        <text>dTMP + ATP = dTDP + ADP</text>
        <dbReference type="Rhea" id="RHEA:13517"/>
        <dbReference type="ChEBI" id="CHEBI:30616"/>
        <dbReference type="ChEBI" id="CHEBI:58369"/>
        <dbReference type="ChEBI" id="CHEBI:63528"/>
        <dbReference type="ChEBI" id="CHEBI:456216"/>
        <dbReference type="EC" id="2.7.4.9"/>
    </reaction>
</comment>
<comment type="similarity">
    <text evidence="1">Belongs to the thymidylate kinase family.</text>
</comment>
<feature type="chain" id="PRO_0000155315" description="Thymidylate kinase">
    <location>
        <begin position="1"/>
        <end position="207"/>
    </location>
</feature>
<feature type="binding site" evidence="1">
    <location>
        <begin position="7"/>
        <end position="14"/>
    </location>
    <ligand>
        <name>ATP</name>
        <dbReference type="ChEBI" id="CHEBI:30616"/>
    </ligand>
</feature>
<accession>Q7WSH2</accession>
<accession>Q6YQZ3</accession>
<reference key="1">
    <citation type="journal article" date="2003" name="Microbiology">
        <title>Two different thymidylate kinase gene homologues, including one that has catalytic activity, are encoded in the onion yellows phytoplasma genome.</title>
        <authorList>
            <person name="Miyata S."/>
            <person name="Oshima K."/>
            <person name="Kakizawa S."/>
            <person name="Nishigawa H."/>
            <person name="Jung H.-Y."/>
            <person name="Kuboyama T."/>
            <person name="Ugaki M."/>
            <person name="Namba S."/>
        </authorList>
    </citation>
    <scope>NUCLEOTIDE SEQUENCE [GENOMIC DNA]</scope>
</reference>
<reference key="2">
    <citation type="journal article" date="2004" name="Nat. Genet.">
        <title>Reductive evolution suggested from the complete genome sequence of a plant-pathogenic phytoplasma.</title>
        <authorList>
            <person name="Oshima K."/>
            <person name="Kakizawa S."/>
            <person name="Nishigawa H."/>
            <person name="Jung H.-Y."/>
            <person name="Wei W."/>
            <person name="Suzuki S."/>
            <person name="Arashida R."/>
            <person name="Nakata D."/>
            <person name="Miyata S."/>
            <person name="Ugaki M."/>
            <person name="Namba S."/>
        </authorList>
    </citation>
    <scope>NUCLEOTIDE SEQUENCE [LARGE SCALE GENOMIC DNA]</scope>
    <source>
        <strain>OY-M</strain>
    </source>
</reference>
<name>KTHY_ONYPE</name>
<gene>
    <name evidence="1" type="primary">tmk</name>
    <name type="synonym">tmk-B</name>
    <name type="ordered locus">PAM_230</name>
</gene>
<keyword id="KW-0067">ATP-binding</keyword>
<keyword id="KW-0418">Kinase</keyword>
<keyword id="KW-0545">Nucleotide biosynthesis</keyword>
<keyword id="KW-0547">Nucleotide-binding</keyword>
<keyword id="KW-0808">Transferase</keyword>
<sequence length="207" mass="24083">MFISFEGCEGTGKTTHSRYLFEKLSKKYSCVLTKEPGGGLFNEVIRNILLHSSNKQIDFHTEALLFAADRAEHLSKLIIPALQQNKIVICDRYLDSTIAYQVYARGLSQDFVLNINNFALNYIPNITFYLDLDPKIGIQRVKQFRPKEINSFDLQKLSFHKKVRKGYLDLCQKDQQKRIFLIDASKPLENIYNIIEQKLKEVFQIEL</sequence>
<evidence type="ECO:0000255" key="1">
    <source>
        <dbReference type="HAMAP-Rule" id="MF_00165"/>
    </source>
</evidence>
<dbReference type="EC" id="2.7.4.9" evidence="1"/>
<dbReference type="EMBL" id="AB094668">
    <property type="protein sequence ID" value="BAC81721.1"/>
    <property type="molecule type" value="Genomic_DNA"/>
</dbReference>
<dbReference type="EMBL" id="AP006628">
    <property type="protein sequence ID" value="BAD04315.1"/>
    <property type="molecule type" value="Genomic_DNA"/>
</dbReference>
<dbReference type="SMR" id="Q7WSH2"/>
<dbReference type="STRING" id="262768.PAM_230"/>
<dbReference type="KEGG" id="poy:PAM_230"/>
<dbReference type="eggNOG" id="COG0125">
    <property type="taxonomic scope" value="Bacteria"/>
</dbReference>
<dbReference type="HOGENOM" id="CLU_049131_0_2_14"/>
<dbReference type="BioCyc" id="OYEL262768:G1G26-276-MONOMER"/>
<dbReference type="Proteomes" id="UP000002523">
    <property type="component" value="Chromosome"/>
</dbReference>
<dbReference type="GO" id="GO:0005829">
    <property type="term" value="C:cytosol"/>
    <property type="evidence" value="ECO:0007669"/>
    <property type="project" value="TreeGrafter"/>
</dbReference>
<dbReference type="GO" id="GO:0005524">
    <property type="term" value="F:ATP binding"/>
    <property type="evidence" value="ECO:0007669"/>
    <property type="project" value="UniProtKB-UniRule"/>
</dbReference>
<dbReference type="GO" id="GO:0004798">
    <property type="term" value="F:dTMP kinase activity"/>
    <property type="evidence" value="ECO:0007669"/>
    <property type="project" value="UniProtKB-UniRule"/>
</dbReference>
<dbReference type="GO" id="GO:0006233">
    <property type="term" value="P:dTDP biosynthetic process"/>
    <property type="evidence" value="ECO:0007669"/>
    <property type="project" value="InterPro"/>
</dbReference>
<dbReference type="GO" id="GO:0006235">
    <property type="term" value="P:dTTP biosynthetic process"/>
    <property type="evidence" value="ECO:0007669"/>
    <property type="project" value="UniProtKB-UniRule"/>
</dbReference>
<dbReference type="GO" id="GO:0006227">
    <property type="term" value="P:dUDP biosynthetic process"/>
    <property type="evidence" value="ECO:0007669"/>
    <property type="project" value="TreeGrafter"/>
</dbReference>
<dbReference type="CDD" id="cd01672">
    <property type="entry name" value="TMPK"/>
    <property type="match status" value="1"/>
</dbReference>
<dbReference type="FunFam" id="3.40.50.300:FF:000225">
    <property type="entry name" value="Thymidylate kinase"/>
    <property type="match status" value="1"/>
</dbReference>
<dbReference type="Gene3D" id="3.40.50.300">
    <property type="entry name" value="P-loop containing nucleotide triphosphate hydrolases"/>
    <property type="match status" value="1"/>
</dbReference>
<dbReference type="HAMAP" id="MF_00165">
    <property type="entry name" value="Thymidylate_kinase"/>
    <property type="match status" value="1"/>
</dbReference>
<dbReference type="InterPro" id="IPR027417">
    <property type="entry name" value="P-loop_NTPase"/>
</dbReference>
<dbReference type="InterPro" id="IPR039430">
    <property type="entry name" value="Thymidylate_kin-like_dom"/>
</dbReference>
<dbReference type="InterPro" id="IPR018095">
    <property type="entry name" value="Thymidylate_kin_CS"/>
</dbReference>
<dbReference type="InterPro" id="IPR018094">
    <property type="entry name" value="Thymidylate_kinase"/>
</dbReference>
<dbReference type="NCBIfam" id="TIGR00041">
    <property type="entry name" value="DTMP_kinase"/>
    <property type="match status" value="1"/>
</dbReference>
<dbReference type="PANTHER" id="PTHR10344">
    <property type="entry name" value="THYMIDYLATE KINASE"/>
    <property type="match status" value="1"/>
</dbReference>
<dbReference type="PANTHER" id="PTHR10344:SF4">
    <property type="entry name" value="UMP-CMP KINASE 2, MITOCHONDRIAL"/>
    <property type="match status" value="1"/>
</dbReference>
<dbReference type="Pfam" id="PF02223">
    <property type="entry name" value="Thymidylate_kin"/>
    <property type="match status" value="1"/>
</dbReference>
<dbReference type="SUPFAM" id="SSF52540">
    <property type="entry name" value="P-loop containing nucleoside triphosphate hydrolases"/>
    <property type="match status" value="1"/>
</dbReference>
<dbReference type="PROSITE" id="PS01331">
    <property type="entry name" value="THYMIDYLATE_KINASE"/>
    <property type="match status" value="1"/>
</dbReference>
<organism>
    <name type="scientific">Onion yellows phytoplasma (strain OY-M)</name>
    <dbReference type="NCBI Taxonomy" id="262768"/>
    <lineage>
        <taxon>Bacteria</taxon>
        <taxon>Bacillati</taxon>
        <taxon>Mycoplasmatota</taxon>
        <taxon>Mollicutes</taxon>
        <taxon>Acholeplasmatales</taxon>
        <taxon>Acholeplasmataceae</taxon>
        <taxon>Candidatus Phytoplasma</taxon>
        <taxon>16SrI (Aster yellows group)</taxon>
    </lineage>
</organism>
<protein>
    <recommendedName>
        <fullName evidence="1">Thymidylate kinase</fullName>
        <ecNumber evidence="1">2.7.4.9</ecNumber>
    </recommendedName>
    <alternativeName>
        <fullName evidence="1">dTMP kinase</fullName>
    </alternativeName>
</protein>
<proteinExistence type="inferred from homology"/>